<dbReference type="EMBL" id="BA000019">
    <property type="protein sequence ID" value="BAB74686.1"/>
    <property type="molecule type" value="Genomic_DNA"/>
</dbReference>
<dbReference type="PIR" id="AD2179">
    <property type="entry name" value="AD2179"/>
</dbReference>
<dbReference type="RefSeq" id="WP_010997138.1">
    <property type="nucleotide sequence ID" value="NZ_RSCN01000003.1"/>
</dbReference>
<dbReference type="SMR" id="Q8YSU5"/>
<dbReference type="STRING" id="103690.gene:10495023"/>
<dbReference type="KEGG" id="ana:alr2987"/>
<dbReference type="eggNOG" id="COG3781">
    <property type="taxonomic scope" value="Bacteria"/>
</dbReference>
<dbReference type="OrthoDB" id="445589at2"/>
<dbReference type="Proteomes" id="UP000002483">
    <property type="component" value="Chromosome"/>
</dbReference>
<dbReference type="GO" id="GO:0005886">
    <property type="term" value="C:plasma membrane"/>
    <property type="evidence" value="ECO:0007669"/>
    <property type="project" value="UniProtKB-SubCell"/>
</dbReference>
<dbReference type="GO" id="GO:0005254">
    <property type="term" value="F:chloride channel activity"/>
    <property type="evidence" value="ECO:0007669"/>
    <property type="project" value="InterPro"/>
</dbReference>
<dbReference type="InterPro" id="IPR021134">
    <property type="entry name" value="Bestrophin-like"/>
</dbReference>
<dbReference type="InterPro" id="IPR044669">
    <property type="entry name" value="YneE/VCCN1/2-like"/>
</dbReference>
<dbReference type="PANTHER" id="PTHR33281">
    <property type="entry name" value="UPF0187 PROTEIN YNEE"/>
    <property type="match status" value="1"/>
</dbReference>
<dbReference type="PANTHER" id="PTHR33281:SF19">
    <property type="entry name" value="VOLTAGE-DEPENDENT ANION CHANNEL-FORMING PROTEIN YNEE"/>
    <property type="match status" value="1"/>
</dbReference>
<dbReference type="Pfam" id="PF01062">
    <property type="entry name" value="Bestrophin"/>
    <property type="match status" value="1"/>
</dbReference>
<keyword id="KW-1003">Cell membrane</keyword>
<keyword id="KW-0406">Ion transport</keyword>
<keyword id="KW-0472">Membrane</keyword>
<keyword id="KW-1185">Reference proteome</keyword>
<keyword id="KW-0812">Transmembrane</keyword>
<keyword id="KW-1133">Transmembrane helix</keyword>
<keyword id="KW-0813">Transport</keyword>
<sequence>MTVAKKHWFQIAFQLRGSVIGAIYKRVICCALFGVLVTLLYQLKIPVSQPILGSVIPSIVLGLLLVFRTNTAYDRFWEGRKAWGSIVNNTRNLARQIWVSVEEVSLKDREAKISVLNLLVAFAVATKLHLRGEPINSELEDLISTSRYFKLKSMNNPPLEVAFWIGDYLQQQYTCKCLNSYQLTSIQELLNNLVDNLGSCERILRTPMPLAYSIHLKQLLLLYCFLLPFQMVESLGWWTGLVVGLVSFTLFGIEAIGLEIENPFGYDPNDLPLDAICNTMKRNIDDLTSLSPNVRSHDLGETSNVTI</sequence>
<name>Y2987_NOSS1</name>
<reference key="1">
    <citation type="journal article" date="2001" name="DNA Res.">
        <title>Complete genomic sequence of the filamentous nitrogen-fixing cyanobacterium Anabaena sp. strain PCC 7120.</title>
        <authorList>
            <person name="Kaneko T."/>
            <person name="Nakamura Y."/>
            <person name="Wolk C.P."/>
            <person name="Kuritz T."/>
            <person name="Sasamoto S."/>
            <person name="Watanabe A."/>
            <person name="Iriguchi M."/>
            <person name="Ishikawa A."/>
            <person name="Kawashima K."/>
            <person name="Kimura T."/>
            <person name="Kishida Y."/>
            <person name="Kohara M."/>
            <person name="Matsumoto M."/>
            <person name="Matsuno A."/>
            <person name="Muraki A."/>
            <person name="Nakazaki N."/>
            <person name="Shimpo S."/>
            <person name="Sugimoto M."/>
            <person name="Takazawa M."/>
            <person name="Yamada M."/>
            <person name="Yasuda M."/>
            <person name="Tabata S."/>
        </authorList>
    </citation>
    <scope>NUCLEOTIDE SEQUENCE [LARGE SCALE GENOMIC DNA]</scope>
    <source>
        <strain>PCC 7120 / SAG 25.82 / UTEX 2576</strain>
    </source>
</reference>
<proteinExistence type="inferred from homology"/>
<protein>
    <recommendedName>
        <fullName>Voltage-dependent anion channel-forming protein alr2987</fullName>
    </recommendedName>
</protein>
<gene>
    <name type="ordered locus">alr2987</name>
</gene>
<evidence type="ECO:0000255" key="1"/>
<evidence type="ECO:0000305" key="2"/>
<organism>
    <name type="scientific">Nostoc sp. (strain PCC 7120 / SAG 25.82 / UTEX 2576)</name>
    <dbReference type="NCBI Taxonomy" id="103690"/>
    <lineage>
        <taxon>Bacteria</taxon>
        <taxon>Bacillati</taxon>
        <taxon>Cyanobacteriota</taxon>
        <taxon>Cyanophyceae</taxon>
        <taxon>Nostocales</taxon>
        <taxon>Nostocaceae</taxon>
        <taxon>Nostoc</taxon>
    </lineage>
</organism>
<feature type="chain" id="PRO_0000217667" description="Voltage-dependent anion channel-forming protein alr2987">
    <location>
        <begin position="1"/>
        <end position="307"/>
    </location>
</feature>
<feature type="transmembrane region" description="Helical" evidence="1">
    <location>
        <begin position="19"/>
        <end position="39"/>
    </location>
</feature>
<feature type="transmembrane region" description="Helical" evidence="1">
    <location>
        <begin position="47"/>
        <end position="67"/>
    </location>
</feature>
<feature type="transmembrane region" description="Helical" evidence="1">
    <location>
        <begin position="209"/>
        <end position="229"/>
    </location>
</feature>
<feature type="transmembrane region" description="Helical" evidence="1">
    <location>
        <begin position="238"/>
        <end position="258"/>
    </location>
</feature>
<accession>Q8YSU5</accession>
<comment type="subcellular location">
    <subcellularLocation>
        <location evidence="1">Cell membrane</location>
        <topology evidence="1">Multi-pass membrane protein</topology>
    </subcellularLocation>
</comment>
<comment type="similarity">
    <text evidence="2">Belongs to the anion channel-forming bestrophin (TC 1.A.46) family.</text>
</comment>